<feature type="signal peptide" evidence="1">
    <location>
        <begin position="1"/>
        <end position="19"/>
    </location>
</feature>
<feature type="chain" id="PRO_0000364131" description="Lectin-domain containing receptor kinase VI.4">
    <location>
        <begin position="20"/>
        <end position="691"/>
    </location>
</feature>
<feature type="topological domain" description="Extracellular" evidence="1">
    <location>
        <begin position="20"/>
        <end position="306"/>
    </location>
</feature>
<feature type="transmembrane region" description="Helical" evidence="1">
    <location>
        <begin position="307"/>
        <end position="327"/>
    </location>
</feature>
<feature type="topological domain" description="Cytoplasmic" evidence="1">
    <location>
        <begin position="328"/>
        <end position="691"/>
    </location>
</feature>
<feature type="domain" description="Protein kinase" evidence="2">
    <location>
        <begin position="363"/>
        <end position="641"/>
    </location>
</feature>
<feature type="region of interest" description="Legume-lectin like">
    <location>
        <begin position="26"/>
        <end position="273"/>
    </location>
</feature>
<feature type="active site" description="Proton acceptor" evidence="2 3">
    <location>
        <position position="491"/>
    </location>
</feature>
<feature type="binding site" evidence="2">
    <location>
        <begin position="369"/>
        <end position="377"/>
    </location>
    <ligand>
        <name>ATP</name>
        <dbReference type="ChEBI" id="CHEBI:30616"/>
    </ligand>
</feature>
<feature type="binding site" evidence="2">
    <location>
        <position position="392"/>
    </location>
    <ligand>
        <name>ATP</name>
        <dbReference type="ChEBI" id="CHEBI:30616"/>
    </ligand>
</feature>
<name>LRK64_ARATH</name>
<comment type="function">
    <text evidence="4">Involved in negative regulation of abscisic acid response in seed germination.</text>
</comment>
<comment type="catalytic activity">
    <reaction>
        <text>L-seryl-[protein] + ATP = O-phospho-L-seryl-[protein] + ADP + H(+)</text>
        <dbReference type="Rhea" id="RHEA:17989"/>
        <dbReference type="Rhea" id="RHEA-COMP:9863"/>
        <dbReference type="Rhea" id="RHEA-COMP:11604"/>
        <dbReference type="ChEBI" id="CHEBI:15378"/>
        <dbReference type="ChEBI" id="CHEBI:29999"/>
        <dbReference type="ChEBI" id="CHEBI:30616"/>
        <dbReference type="ChEBI" id="CHEBI:83421"/>
        <dbReference type="ChEBI" id="CHEBI:456216"/>
        <dbReference type="EC" id="2.7.11.1"/>
    </reaction>
</comment>
<comment type="catalytic activity">
    <reaction>
        <text>L-threonyl-[protein] + ATP = O-phospho-L-threonyl-[protein] + ADP + H(+)</text>
        <dbReference type="Rhea" id="RHEA:46608"/>
        <dbReference type="Rhea" id="RHEA-COMP:11060"/>
        <dbReference type="Rhea" id="RHEA-COMP:11605"/>
        <dbReference type="ChEBI" id="CHEBI:15378"/>
        <dbReference type="ChEBI" id="CHEBI:30013"/>
        <dbReference type="ChEBI" id="CHEBI:30616"/>
        <dbReference type="ChEBI" id="CHEBI:61977"/>
        <dbReference type="ChEBI" id="CHEBI:456216"/>
        <dbReference type="EC" id="2.7.11.1"/>
    </reaction>
</comment>
<comment type="subcellular location">
    <subcellularLocation>
        <location evidence="5">Cell membrane</location>
        <topology evidence="5">Single-pass type I membrane protein</topology>
    </subcellularLocation>
</comment>
<comment type="disruption phenotype">
    <text evidence="4">Slight enhancement in abscisic acid-inhibited germination. Redundant with LECRKA4.1 and LECRKA4.2.</text>
</comment>
<comment type="similarity">
    <text evidence="5">In the C-terminal section; belongs to the protein kinase superfamily. Ser/Thr protein kinase family.</text>
</comment>
<comment type="similarity">
    <text evidence="5">In the N-terminal section; belongs to the leguminous lectin family.</text>
</comment>
<comment type="sequence caution" evidence="5">
    <conflict type="erroneous initiation">
        <sequence resource="EMBL-CDS" id="CAB82272"/>
    </conflict>
    <text>Extended N-terminus.</text>
</comment>
<sequence length="691" mass="76735">MGRAKSMVSLLLVLFLVRAHVATTETTTEFIFHGFKGNQSEIHMQGDSTITSNGLLRLTDRNSDVVGTAFYHKPVRLLDSNSTNTTVRSFSTSFIFIIPSSSTSNGGFGFTFTLSPTPNRTDADPEQYMGLLNERNDGNSSNHVFAVEFDTVQGFKDGTNRIGNHIGLNFNSLSSDVQEPVAYFNNNDSQKEEFQLVSGEPIQVFLDYHGPTKTLNLTVYPTRLGYKPRIPLISREVPKLSDIVVDEMFVGFTAATGRHGQSSAHYVMGWSFASGGEHPLAAMLDISQLPPPPPNKAKKRGYNGKVIALIVALSTVISIMLVLLFLFMMYKKRMQQEEILEDWEIDHPHRFRYRDLYKATEGFKENRVVGTGGFGIVYRGNIRSSSDQIAVKKITPNSMQGVREFVAEIESLGRLRHKNLVNLQGWCKHRNDLLLIYDYIPNGSLDSLLYSKPRRSGAVLSWNARFQIAKGIASGLLYLHEEWEQIVIHRDVKPSNVLIDSDMNPRLGDFGLARLYERGSQSCTTVVVGTIGYMAPELARNGNSSSASDVFAFGVLLLEIVSGRKPTDSGTFFIADWVMELQASGEILSAIDPRLGSGYDEGEARLALAVGLLCCHHKPESRPLMRMVLRYLNRDEDVPEIHDNWGYSDSSRTDLGSKLVGYISSDRASSSHSHTSSSLTRISSTSLISGR</sequence>
<organism>
    <name type="scientific">Arabidopsis thaliana</name>
    <name type="common">Mouse-ear cress</name>
    <dbReference type="NCBI Taxonomy" id="3702"/>
    <lineage>
        <taxon>Eukaryota</taxon>
        <taxon>Viridiplantae</taxon>
        <taxon>Streptophyta</taxon>
        <taxon>Embryophyta</taxon>
        <taxon>Tracheophyta</taxon>
        <taxon>Spermatophyta</taxon>
        <taxon>Magnoliopsida</taxon>
        <taxon>eudicotyledons</taxon>
        <taxon>Gunneridae</taxon>
        <taxon>Pentapetalae</taxon>
        <taxon>rosids</taxon>
        <taxon>malvids</taxon>
        <taxon>Brassicales</taxon>
        <taxon>Brassicaceae</taxon>
        <taxon>Camelineae</taxon>
        <taxon>Arabidopsis</taxon>
    </lineage>
</organism>
<reference key="1">
    <citation type="journal article" date="2000" name="Nature">
        <title>Sequence and analysis of chromosome 5 of the plant Arabidopsis thaliana.</title>
        <authorList>
            <person name="Tabata S."/>
            <person name="Kaneko T."/>
            <person name="Nakamura Y."/>
            <person name="Kotani H."/>
            <person name="Kato T."/>
            <person name="Asamizu E."/>
            <person name="Miyajima N."/>
            <person name="Sasamoto S."/>
            <person name="Kimura T."/>
            <person name="Hosouchi T."/>
            <person name="Kawashima K."/>
            <person name="Kohara M."/>
            <person name="Matsumoto M."/>
            <person name="Matsuno A."/>
            <person name="Muraki A."/>
            <person name="Nakayama S."/>
            <person name="Nakazaki N."/>
            <person name="Naruo K."/>
            <person name="Okumura S."/>
            <person name="Shinpo S."/>
            <person name="Takeuchi C."/>
            <person name="Wada T."/>
            <person name="Watanabe A."/>
            <person name="Yamada M."/>
            <person name="Yasuda M."/>
            <person name="Sato S."/>
            <person name="de la Bastide M."/>
            <person name="Huang E."/>
            <person name="Spiegel L."/>
            <person name="Gnoj L."/>
            <person name="O'Shaughnessy A."/>
            <person name="Preston R."/>
            <person name="Habermann K."/>
            <person name="Murray J."/>
            <person name="Johnson D."/>
            <person name="Rohlfing T."/>
            <person name="Nelson J."/>
            <person name="Stoneking T."/>
            <person name="Pepin K."/>
            <person name="Spieth J."/>
            <person name="Sekhon M."/>
            <person name="Armstrong J."/>
            <person name="Becker M."/>
            <person name="Belter E."/>
            <person name="Cordum H."/>
            <person name="Cordes M."/>
            <person name="Courtney L."/>
            <person name="Courtney W."/>
            <person name="Dante M."/>
            <person name="Du H."/>
            <person name="Edwards J."/>
            <person name="Fryman J."/>
            <person name="Haakensen B."/>
            <person name="Lamar E."/>
            <person name="Latreille P."/>
            <person name="Leonard S."/>
            <person name="Meyer R."/>
            <person name="Mulvaney E."/>
            <person name="Ozersky P."/>
            <person name="Riley A."/>
            <person name="Strowmatt C."/>
            <person name="Wagner-McPherson C."/>
            <person name="Wollam A."/>
            <person name="Yoakum M."/>
            <person name="Bell M."/>
            <person name="Dedhia N."/>
            <person name="Parnell L."/>
            <person name="Shah R."/>
            <person name="Rodriguez M."/>
            <person name="Hoon See L."/>
            <person name="Vil D."/>
            <person name="Baker J."/>
            <person name="Kirchoff K."/>
            <person name="Toth K."/>
            <person name="King L."/>
            <person name="Bahret A."/>
            <person name="Miller B."/>
            <person name="Marra M.A."/>
            <person name="Martienssen R."/>
            <person name="McCombie W.R."/>
            <person name="Wilson R.K."/>
            <person name="Murphy G."/>
            <person name="Bancroft I."/>
            <person name="Volckaert G."/>
            <person name="Wambutt R."/>
            <person name="Duesterhoeft A."/>
            <person name="Stiekema W."/>
            <person name="Pohl T."/>
            <person name="Entian K.-D."/>
            <person name="Terryn N."/>
            <person name="Hartley N."/>
            <person name="Bent E."/>
            <person name="Johnson S."/>
            <person name="Langham S.-A."/>
            <person name="McCullagh B."/>
            <person name="Robben J."/>
            <person name="Grymonprez B."/>
            <person name="Zimmermann W."/>
            <person name="Ramsperger U."/>
            <person name="Wedler H."/>
            <person name="Balke K."/>
            <person name="Wedler E."/>
            <person name="Peters S."/>
            <person name="van Staveren M."/>
            <person name="Dirkse W."/>
            <person name="Mooijman P."/>
            <person name="Klein Lankhorst R."/>
            <person name="Weitzenegger T."/>
            <person name="Bothe G."/>
            <person name="Rose M."/>
            <person name="Hauf J."/>
            <person name="Berneiser S."/>
            <person name="Hempel S."/>
            <person name="Feldpausch M."/>
            <person name="Lamberth S."/>
            <person name="Villarroel R."/>
            <person name="Gielen J."/>
            <person name="Ardiles W."/>
            <person name="Bents O."/>
            <person name="Lemcke K."/>
            <person name="Kolesov G."/>
            <person name="Mayer K.F.X."/>
            <person name="Rudd S."/>
            <person name="Schoof H."/>
            <person name="Schueller C."/>
            <person name="Zaccaria P."/>
            <person name="Mewes H.-W."/>
            <person name="Bevan M."/>
            <person name="Fransz P.F."/>
        </authorList>
    </citation>
    <scope>NUCLEOTIDE SEQUENCE [LARGE SCALE GENOMIC DNA]</scope>
    <source>
        <strain>cv. Columbia</strain>
    </source>
</reference>
<reference key="2">
    <citation type="journal article" date="2017" name="Plant J.">
        <title>Araport11: a complete reannotation of the Arabidopsis thaliana reference genome.</title>
        <authorList>
            <person name="Cheng C.Y."/>
            <person name="Krishnakumar V."/>
            <person name="Chan A.P."/>
            <person name="Thibaud-Nissen F."/>
            <person name="Schobel S."/>
            <person name="Town C.D."/>
        </authorList>
    </citation>
    <scope>GENOME REANNOTATION</scope>
    <source>
        <strain>cv. Columbia</strain>
    </source>
</reference>
<reference key="3">
    <citation type="submission" date="2004-08" db="EMBL/GenBank/DDBJ databases">
        <title>Arabidopsis ORF clones.</title>
        <authorList>
            <person name="Kim C.J."/>
            <person name="Chen H."/>
            <person name="Cheuk R.F."/>
            <person name="Shinn P."/>
            <person name="Ecker J.R."/>
        </authorList>
    </citation>
    <scope>NUCLEOTIDE SEQUENCE [LARGE SCALE MRNA]</scope>
</reference>
<reference key="4">
    <citation type="journal article" date="2002" name="Crit. Rev. Plant Sci.">
        <title>Lectin receptor kinases in plants.</title>
        <authorList>
            <person name="Barre A."/>
            <person name="Herve C."/>
            <person name="Lescure B."/>
            <person name="Rouge P."/>
        </authorList>
    </citation>
    <scope>GENE FAMILY</scope>
</reference>
<reference key="5">
    <citation type="journal article" date="2009" name="J. Exp. Bot.">
        <title>Arabidopsis L-type lectin receptor kinases: phylogeny, classification, and expression profiles.</title>
        <authorList>
            <person name="Bouwmeester K."/>
            <person name="Govers F."/>
        </authorList>
    </citation>
    <scope>GENE FAMILY</scope>
    <scope>NOMENCLATURE</scope>
</reference>
<reference key="6">
    <citation type="journal article" date="2009" name="Plant Physiol.">
        <title>The Arabidopsis a4 subfamily of lectin receptor kinases negatively regulates abscisic acid response in seed germination.</title>
        <authorList>
            <person name="Xin Z."/>
            <person name="Wang A."/>
            <person name="Yang G."/>
            <person name="Gao P."/>
            <person name="Zheng Z.-L."/>
        </authorList>
    </citation>
    <scope>FUNCTION</scope>
    <scope>DISRUPTION PHENOTYPE</scope>
</reference>
<protein>
    <recommendedName>
        <fullName>Lectin-domain containing receptor kinase VI.4</fullName>
        <shortName>LecRK-VI.4</shortName>
        <ecNumber>2.7.11.1</ecNumber>
    </recommendedName>
    <alternativeName>
        <fullName>Lectin receptor kinase A4.3</fullName>
    </alternativeName>
</protein>
<accession>Q66GN2</accession>
<accession>Q9M019</accession>
<dbReference type="EC" id="2.7.11.1"/>
<dbReference type="EMBL" id="AL161946">
    <property type="protein sequence ID" value="CAB82272.1"/>
    <property type="status" value="ALT_INIT"/>
    <property type="molecule type" value="Genomic_DNA"/>
</dbReference>
<dbReference type="EMBL" id="CP002688">
    <property type="protein sequence ID" value="AED90360.1"/>
    <property type="molecule type" value="Genomic_DNA"/>
</dbReference>
<dbReference type="EMBL" id="BT015370">
    <property type="protein sequence ID" value="AAU05493.1"/>
    <property type="molecule type" value="mRNA"/>
</dbReference>
<dbReference type="PIR" id="T48177">
    <property type="entry name" value="T48177"/>
</dbReference>
<dbReference type="RefSeq" id="NP_195776.2">
    <property type="nucleotide sequence ID" value="NM_120234.4"/>
</dbReference>
<dbReference type="SMR" id="Q66GN2"/>
<dbReference type="FunCoup" id="Q66GN2">
    <property type="interactions" value="380"/>
</dbReference>
<dbReference type="STRING" id="3702.Q66GN2"/>
<dbReference type="iPTMnet" id="Q66GN2"/>
<dbReference type="PaxDb" id="3702-AT5G01560.1"/>
<dbReference type="ProteomicsDB" id="238723"/>
<dbReference type="EnsemblPlants" id="AT5G01560.1">
    <property type="protein sequence ID" value="AT5G01560.1"/>
    <property type="gene ID" value="AT5G01560"/>
</dbReference>
<dbReference type="GeneID" id="830345"/>
<dbReference type="Gramene" id="AT5G01560.1">
    <property type="protein sequence ID" value="AT5G01560.1"/>
    <property type="gene ID" value="AT5G01560"/>
</dbReference>
<dbReference type="KEGG" id="ath:AT5G01560"/>
<dbReference type="Araport" id="AT5G01560"/>
<dbReference type="TAIR" id="AT5G01560">
    <property type="gene designation" value="LECRKA4.3"/>
</dbReference>
<dbReference type="eggNOG" id="ENOG502QTCP">
    <property type="taxonomic scope" value="Eukaryota"/>
</dbReference>
<dbReference type="HOGENOM" id="CLU_000288_62_3_1"/>
<dbReference type="InParanoid" id="Q66GN2"/>
<dbReference type="OMA" id="KPRTPMI"/>
<dbReference type="PhylomeDB" id="Q66GN2"/>
<dbReference type="PRO" id="PR:Q66GN2"/>
<dbReference type="Proteomes" id="UP000006548">
    <property type="component" value="Chromosome 5"/>
</dbReference>
<dbReference type="ExpressionAtlas" id="Q66GN2">
    <property type="expression patterns" value="baseline and differential"/>
</dbReference>
<dbReference type="GO" id="GO:0005886">
    <property type="term" value="C:plasma membrane"/>
    <property type="evidence" value="ECO:0007669"/>
    <property type="project" value="UniProtKB-SubCell"/>
</dbReference>
<dbReference type="GO" id="GO:0005524">
    <property type="term" value="F:ATP binding"/>
    <property type="evidence" value="ECO:0007669"/>
    <property type="project" value="UniProtKB-KW"/>
</dbReference>
<dbReference type="GO" id="GO:0030246">
    <property type="term" value="F:carbohydrate binding"/>
    <property type="evidence" value="ECO:0007669"/>
    <property type="project" value="UniProtKB-KW"/>
</dbReference>
<dbReference type="GO" id="GO:0106310">
    <property type="term" value="F:protein serine kinase activity"/>
    <property type="evidence" value="ECO:0007669"/>
    <property type="project" value="RHEA"/>
</dbReference>
<dbReference type="GO" id="GO:0004674">
    <property type="term" value="F:protein serine/threonine kinase activity"/>
    <property type="evidence" value="ECO:0007669"/>
    <property type="project" value="UniProtKB-KW"/>
</dbReference>
<dbReference type="GO" id="GO:0009738">
    <property type="term" value="P:abscisic acid-activated signaling pathway"/>
    <property type="evidence" value="ECO:0000315"/>
    <property type="project" value="TAIR"/>
</dbReference>
<dbReference type="GO" id="GO:0009845">
    <property type="term" value="P:seed germination"/>
    <property type="evidence" value="ECO:0000315"/>
    <property type="project" value="TAIR"/>
</dbReference>
<dbReference type="CDD" id="cd06899">
    <property type="entry name" value="lectin_legume_LecRK_Arcelin_ConA"/>
    <property type="match status" value="1"/>
</dbReference>
<dbReference type="CDD" id="cd14066">
    <property type="entry name" value="STKc_IRAK"/>
    <property type="match status" value="1"/>
</dbReference>
<dbReference type="FunFam" id="1.10.510.10:FF:000108">
    <property type="entry name" value="L-type lectin-domain containing receptor kinase S.4"/>
    <property type="match status" value="1"/>
</dbReference>
<dbReference type="FunFam" id="2.60.120.200:FF:000096">
    <property type="entry name" value="L-type lectin-domain containing receptor kinase V.9"/>
    <property type="match status" value="1"/>
</dbReference>
<dbReference type="FunFam" id="3.30.200.20:FF:000491">
    <property type="entry name" value="Lectin-domain containing receptor kinase VI.3"/>
    <property type="match status" value="1"/>
</dbReference>
<dbReference type="Gene3D" id="2.60.120.200">
    <property type="match status" value="1"/>
</dbReference>
<dbReference type="Gene3D" id="3.30.200.20">
    <property type="entry name" value="Phosphorylase Kinase, domain 1"/>
    <property type="match status" value="1"/>
</dbReference>
<dbReference type="Gene3D" id="1.10.510.10">
    <property type="entry name" value="Transferase(Phosphotransferase) domain 1"/>
    <property type="match status" value="1"/>
</dbReference>
<dbReference type="InterPro" id="IPR013320">
    <property type="entry name" value="ConA-like_dom_sf"/>
</dbReference>
<dbReference type="InterPro" id="IPR011009">
    <property type="entry name" value="Kinase-like_dom_sf"/>
</dbReference>
<dbReference type="InterPro" id="IPR050528">
    <property type="entry name" value="L-type_Lectin-RKs"/>
</dbReference>
<dbReference type="InterPro" id="IPR001220">
    <property type="entry name" value="Legume_lectin_dom"/>
</dbReference>
<dbReference type="InterPro" id="IPR000719">
    <property type="entry name" value="Prot_kinase_dom"/>
</dbReference>
<dbReference type="InterPro" id="IPR017441">
    <property type="entry name" value="Protein_kinase_ATP_BS"/>
</dbReference>
<dbReference type="InterPro" id="IPR008271">
    <property type="entry name" value="Ser/Thr_kinase_AS"/>
</dbReference>
<dbReference type="PANTHER" id="PTHR27007">
    <property type="match status" value="1"/>
</dbReference>
<dbReference type="Pfam" id="PF00139">
    <property type="entry name" value="Lectin_legB"/>
    <property type="match status" value="1"/>
</dbReference>
<dbReference type="Pfam" id="PF00069">
    <property type="entry name" value="Pkinase"/>
    <property type="match status" value="1"/>
</dbReference>
<dbReference type="SMART" id="SM00220">
    <property type="entry name" value="S_TKc"/>
    <property type="match status" value="1"/>
</dbReference>
<dbReference type="SUPFAM" id="SSF49899">
    <property type="entry name" value="Concanavalin A-like lectins/glucanases"/>
    <property type="match status" value="1"/>
</dbReference>
<dbReference type="SUPFAM" id="SSF56112">
    <property type="entry name" value="Protein kinase-like (PK-like)"/>
    <property type="match status" value="1"/>
</dbReference>
<dbReference type="PROSITE" id="PS00107">
    <property type="entry name" value="PROTEIN_KINASE_ATP"/>
    <property type="match status" value="1"/>
</dbReference>
<dbReference type="PROSITE" id="PS50011">
    <property type="entry name" value="PROTEIN_KINASE_DOM"/>
    <property type="match status" value="1"/>
</dbReference>
<dbReference type="PROSITE" id="PS00108">
    <property type="entry name" value="PROTEIN_KINASE_ST"/>
    <property type="match status" value="1"/>
</dbReference>
<evidence type="ECO:0000255" key="1"/>
<evidence type="ECO:0000255" key="2">
    <source>
        <dbReference type="PROSITE-ProRule" id="PRU00159"/>
    </source>
</evidence>
<evidence type="ECO:0000255" key="3">
    <source>
        <dbReference type="PROSITE-ProRule" id="PRU10027"/>
    </source>
</evidence>
<evidence type="ECO:0000269" key="4">
    <source>
    </source>
</evidence>
<evidence type="ECO:0000305" key="5"/>
<keyword id="KW-0067">ATP-binding</keyword>
<keyword id="KW-1003">Cell membrane</keyword>
<keyword id="KW-0418">Kinase</keyword>
<keyword id="KW-0430">Lectin</keyword>
<keyword id="KW-0472">Membrane</keyword>
<keyword id="KW-0547">Nucleotide-binding</keyword>
<keyword id="KW-0675">Receptor</keyword>
<keyword id="KW-1185">Reference proteome</keyword>
<keyword id="KW-0723">Serine/threonine-protein kinase</keyword>
<keyword id="KW-0732">Signal</keyword>
<keyword id="KW-0808">Transferase</keyword>
<keyword id="KW-0812">Transmembrane</keyword>
<keyword id="KW-1133">Transmembrane helix</keyword>
<gene>
    <name type="primary">LECRK64</name>
    <name type="synonym">LECRKA4.3</name>
    <name type="ordered locus">At5g01560</name>
    <name type="ORF">F7A7.80</name>
</gene>
<proteinExistence type="evidence at transcript level"/>